<proteinExistence type="inferred from homology"/>
<feature type="chain" id="PRO_0000290701" description="Undecaprenyl-diphosphatase">
    <location>
        <begin position="1"/>
        <end position="304"/>
    </location>
</feature>
<feature type="transmembrane region" description="Helical" evidence="1">
    <location>
        <begin position="5"/>
        <end position="25"/>
    </location>
</feature>
<feature type="transmembrane region" description="Helical" evidence="1">
    <location>
        <begin position="47"/>
        <end position="67"/>
    </location>
</feature>
<feature type="transmembrane region" description="Helical" evidence="1">
    <location>
        <begin position="72"/>
        <end position="92"/>
    </location>
</feature>
<feature type="transmembrane region" description="Helical" evidence="1">
    <location>
        <begin position="111"/>
        <end position="131"/>
    </location>
</feature>
<feature type="transmembrane region" description="Helical" evidence="1">
    <location>
        <begin position="137"/>
        <end position="157"/>
    </location>
</feature>
<feature type="transmembrane region" description="Helical" evidence="1">
    <location>
        <begin position="209"/>
        <end position="231"/>
    </location>
</feature>
<feature type="transmembrane region" description="Helical" evidence="1">
    <location>
        <begin position="248"/>
        <end position="268"/>
    </location>
</feature>
<feature type="transmembrane region" description="Helical" evidence="1">
    <location>
        <begin position="283"/>
        <end position="303"/>
    </location>
</feature>
<comment type="function">
    <text evidence="1">Catalyzes the dephosphorylation of undecaprenyl diphosphate (UPP). Confers resistance to bacitracin.</text>
</comment>
<comment type="catalytic activity">
    <reaction evidence="1">
        <text>di-trans,octa-cis-undecaprenyl diphosphate + H2O = di-trans,octa-cis-undecaprenyl phosphate + phosphate + H(+)</text>
        <dbReference type="Rhea" id="RHEA:28094"/>
        <dbReference type="ChEBI" id="CHEBI:15377"/>
        <dbReference type="ChEBI" id="CHEBI:15378"/>
        <dbReference type="ChEBI" id="CHEBI:43474"/>
        <dbReference type="ChEBI" id="CHEBI:58405"/>
        <dbReference type="ChEBI" id="CHEBI:60392"/>
        <dbReference type="EC" id="3.6.1.27"/>
    </reaction>
</comment>
<comment type="subcellular location">
    <subcellularLocation>
        <location evidence="1">Cell membrane</location>
        <topology evidence="1">Multi-pass membrane protein</topology>
    </subcellularLocation>
</comment>
<comment type="miscellaneous">
    <text>Bacitracin is thought to be involved in the inhibition of peptidoglycan synthesis by sequestering undecaprenyl diphosphate, thereby reducing the pool of lipid carrier available.</text>
</comment>
<comment type="similarity">
    <text evidence="1">Belongs to the UppP family.</text>
</comment>
<protein>
    <recommendedName>
        <fullName evidence="1">Undecaprenyl-diphosphatase</fullName>
        <ecNumber evidence="1">3.6.1.27</ecNumber>
    </recommendedName>
    <alternativeName>
        <fullName evidence="1">Bacitracin resistance protein</fullName>
    </alternativeName>
    <alternativeName>
        <fullName evidence="1">Undecaprenyl pyrophosphate phosphatase</fullName>
    </alternativeName>
</protein>
<reference key="1">
    <citation type="journal article" date="2006" name="Genome Res.">
        <title>Skewed genomic variability in strains of the toxigenic bacterial pathogen, Clostridium perfringens.</title>
        <authorList>
            <person name="Myers G.S.A."/>
            <person name="Rasko D.A."/>
            <person name="Cheung J.K."/>
            <person name="Ravel J."/>
            <person name="Seshadri R."/>
            <person name="DeBoy R.T."/>
            <person name="Ren Q."/>
            <person name="Varga J."/>
            <person name="Awad M.M."/>
            <person name="Brinkac L.M."/>
            <person name="Daugherty S.C."/>
            <person name="Haft D.H."/>
            <person name="Dodson R.J."/>
            <person name="Madupu R."/>
            <person name="Nelson W.C."/>
            <person name="Rosovitz M.J."/>
            <person name="Sullivan S.A."/>
            <person name="Khouri H."/>
            <person name="Dimitrov G.I."/>
            <person name="Watkins K.L."/>
            <person name="Mulligan S."/>
            <person name="Benton J."/>
            <person name="Radune D."/>
            <person name="Fisher D.J."/>
            <person name="Atkins H.S."/>
            <person name="Hiscox T."/>
            <person name="Jost B.H."/>
            <person name="Billington S.J."/>
            <person name="Songer J.G."/>
            <person name="McClane B.A."/>
            <person name="Titball R.W."/>
            <person name="Rood J.I."/>
            <person name="Melville S.B."/>
            <person name="Paulsen I.T."/>
        </authorList>
    </citation>
    <scope>NUCLEOTIDE SEQUENCE [LARGE SCALE GENOMIC DNA]</scope>
    <source>
        <strain>ATCC 13124 / DSM 756 / JCM 1290 / NCIMB 6125 / NCTC 8237 / S 107 / Type A</strain>
    </source>
</reference>
<name>UPPP_CLOP1</name>
<dbReference type="EC" id="3.6.1.27" evidence="1"/>
<dbReference type="EMBL" id="CP000246">
    <property type="protein sequence ID" value="ABG83114.1"/>
    <property type="molecule type" value="Genomic_DNA"/>
</dbReference>
<dbReference type="RefSeq" id="WP_011590690.1">
    <property type="nucleotide sequence ID" value="NC_008261.1"/>
</dbReference>
<dbReference type="SMR" id="Q0TRA5"/>
<dbReference type="STRING" id="195103.CPF_1390"/>
<dbReference type="PaxDb" id="195103-CPF_1390"/>
<dbReference type="KEGG" id="cpf:CPF_1390"/>
<dbReference type="eggNOG" id="COG1968">
    <property type="taxonomic scope" value="Bacteria"/>
</dbReference>
<dbReference type="HOGENOM" id="CLU_060296_2_0_9"/>
<dbReference type="Proteomes" id="UP000001823">
    <property type="component" value="Chromosome"/>
</dbReference>
<dbReference type="GO" id="GO:0005886">
    <property type="term" value="C:plasma membrane"/>
    <property type="evidence" value="ECO:0007669"/>
    <property type="project" value="UniProtKB-SubCell"/>
</dbReference>
<dbReference type="GO" id="GO:0050380">
    <property type="term" value="F:undecaprenyl-diphosphatase activity"/>
    <property type="evidence" value="ECO:0007669"/>
    <property type="project" value="UniProtKB-UniRule"/>
</dbReference>
<dbReference type="GO" id="GO:0071555">
    <property type="term" value="P:cell wall organization"/>
    <property type="evidence" value="ECO:0007669"/>
    <property type="project" value="UniProtKB-KW"/>
</dbReference>
<dbReference type="GO" id="GO:0009252">
    <property type="term" value="P:peptidoglycan biosynthetic process"/>
    <property type="evidence" value="ECO:0007669"/>
    <property type="project" value="UniProtKB-KW"/>
</dbReference>
<dbReference type="GO" id="GO:0008360">
    <property type="term" value="P:regulation of cell shape"/>
    <property type="evidence" value="ECO:0007669"/>
    <property type="project" value="UniProtKB-KW"/>
</dbReference>
<dbReference type="GO" id="GO:0046677">
    <property type="term" value="P:response to antibiotic"/>
    <property type="evidence" value="ECO:0007669"/>
    <property type="project" value="UniProtKB-UniRule"/>
</dbReference>
<dbReference type="HAMAP" id="MF_01006">
    <property type="entry name" value="Undec_diphosphatase"/>
    <property type="match status" value="1"/>
</dbReference>
<dbReference type="InterPro" id="IPR003824">
    <property type="entry name" value="UppP"/>
</dbReference>
<dbReference type="NCBIfam" id="NF001390">
    <property type="entry name" value="PRK00281.1-4"/>
    <property type="match status" value="1"/>
</dbReference>
<dbReference type="NCBIfam" id="TIGR00753">
    <property type="entry name" value="undec_PP_bacA"/>
    <property type="match status" value="1"/>
</dbReference>
<dbReference type="PANTHER" id="PTHR30622">
    <property type="entry name" value="UNDECAPRENYL-DIPHOSPHATASE"/>
    <property type="match status" value="1"/>
</dbReference>
<dbReference type="PANTHER" id="PTHR30622:SF3">
    <property type="entry name" value="UNDECAPRENYL-DIPHOSPHATASE"/>
    <property type="match status" value="1"/>
</dbReference>
<dbReference type="Pfam" id="PF02673">
    <property type="entry name" value="BacA"/>
    <property type="match status" value="1"/>
</dbReference>
<sequence>MGIDFLFILKALIIAIVEGLTEFVPVSSTGHMILVGDLIHFNTQSGGFPEMYEVVIQLGAILAVVVLYWRKISSSVVEFLCYIFSFIGLKTSGDKRKYEKRLAESETGFRFGINVIIGTIPAAILGLLFHDEIKEYLFSTKTVAIGFIVGGILLIVIENNFRKRAKRSKIVKDIDKMTYGQSLLVGCFQCLSLWPGMSRSASTIMGGWISGLSTTVATEFTFFLAIPAMVGASGLDLFKFDYSQMNATNWISLILGFIVAFIVSLVVIDKFINYLKKKPMRVFAIYRVFAGIVLAILIFTKVIS</sequence>
<evidence type="ECO:0000255" key="1">
    <source>
        <dbReference type="HAMAP-Rule" id="MF_01006"/>
    </source>
</evidence>
<accession>Q0TRA5</accession>
<organism>
    <name type="scientific">Clostridium perfringens (strain ATCC 13124 / DSM 756 / JCM 1290 / NCIMB 6125 / NCTC 8237 / Type A)</name>
    <dbReference type="NCBI Taxonomy" id="195103"/>
    <lineage>
        <taxon>Bacteria</taxon>
        <taxon>Bacillati</taxon>
        <taxon>Bacillota</taxon>
        <taxon>Clostridia</taxon>
        <taxon>Eubacteriales</taxon>
        <taxon>Clostridiaceae</taxon>
        <taxon>Clostridium</taxon>
    </lineage>
</organism>
<keyword id="KW-0046">Antibiotic resistance</keyword>
<keyword id="KW-1003">Cell membrane</keyword>
<keyword id="KW-0133">Cell shape</keyword>
<keyword id="KW-0961">Cell wall biogenesis/degradation</keyword>
<keyword id="KW-0378">Hydrolase</keyword>
<keyword id="KW-0472">Membrane</keyword>
<keyword id="KW-0573">Peptidoglycan synthesis</keyword>
<keyword id="KW-0812">Transmembrane</keyword>
<keyword id="KW-1133">Transmembrane helix</keyword>
<gene>
    <name evidence="1" type="primary">uppP</name>
    <name type="ordered locus">CPF_1390</name>
</gene>